<name>ATPO_EREGS</name>
<organism>
    <name type="scientific">Eremothecium gossypii (strain ATCC 10895 / CBS 109.51 / FGSC 9923 / NRRL Y-1056)</name>
    <name type="common">Yeast</name>
    <name type="synonym">Ashbya gossypii</name>
    <dbReference type="NCBI Taxonomy" id="284811"/>
    <lineage>
        <taxon>Eukaryota</taxon>
        <taxon>Fungi</taxon>
        <taxon>Dikarya</taxon>
        <taxon>Ascomycota</taxon>
        <taxon>Saccharomycotina</taxon>
        <taxon>Saccharomycetes</taxon>
        <taxon>Saccharomycetales</taxon>
        <taxon>Saccharomycetaceae</taxon>
        <taxon>Eremothecium</taxon>
    </lineage>
</organism>
<feature type="transit peptide" description="Mitochondrion" evidence="2">
    <location>
        <begin position="1"/>
        <end status="unknown"/>
    </location>
</feature>
<feature type="chain" id="PRO_0000002651" description="ATP synthase subunit 5, mitochondrial">
    <location>
        <begin status="unknown"/>
        <end position="207"/>
    </location>
</feature>
<gene>
    <name type="primary">ATP5</name>
    <name type="ordered locus">AAL065C</name>
</gene>
<keyword id="KW-0066">ATP synthesis</keyword>
<keyword id="KW-0375">Hydrogen ion transport</keyword>
<keyword id="KW-0406">Ion transport</keyword>
<keyword id="KW-0472">Membrane</keyword>
<keyword id="KW-0496">Mitochondrion</keyword>
<keyword id="KW-0999">Mitochondrion inner membrane</keyword>
<keyword id="KW-1185">Reference proteome</keyword>
<keyword id="KW-0809">Transit peptide</keyword>
<keyword id="KW-0813">Transport</keyword>
<dbReference type="EMBL" id="AE016814">
    <property type="protein sequence ID" value="AAS50301.1"/>
    <property type="molecule type" value="Genomic_DNA"/>
</dbReference>
<dbReference type="RefSeq" id="NP_982477.1">
    <property type="nucleotide sequence ID" value="NM_207830.1"/>
</dbReference>
<dbReference type="SMR" id="Q75EZ3"/>
<dbReference type="FunCoup" id="Q75EZ3">
    <property type="interactions" value="736"/>
</dbReference>
<dbReference type="STRING" id="284811.Q75EZ3"/>
<dbReference type="EnsemblFungi" id="AAS50301">
    <property type="protein sequence ID" value="AAS50301"/>
    <property type="gene ID" value="AGOS_AAL065C"/>
</dbReference>
<dbReference type="GeneID" id="4618447"/>
<dbReference type="KEGG" id="ago:AGOS_AAL065C"/>
<dbReference type="eggNOG" id="KOG1662">
    <property type="taxonomic scope" value="Eukaryota"/>
</dbReference>
<dbReference type="HOGENOM" id="CLU_085114_0_0_1"/>
<dbReference type="InParanoid" id="Q75EZ3"/>
<dbReference type="OMA" id="MVDNIQD"/>
<dbReference type="OrthoDB" id="1262810at2759"/>
<dbReference type="Proteomes" id="UP000000591">
    <property type="component" value="Chromosome I"/>
</dbReference>
<dbReference type="GO" id="GO:0005743">
    <property type="term" value="C:mitochondrial inner membrane"/>
    <property type="evidence" value="ECO:0007669"/>
    <property type="project" value="UniProtKB-SubCell"/>
</dbReference>
<dbReference type="GO" id="GO:0045259">
    <property type="term" value="C:proton-transporting ATP synthase complex"/>
    <property type="evidence" value="ECO:0007669"/>
    <property type="project" value="EnsemblFungi"/>
</dbReference>
<dbReference type="GO" id="GO:0046933">
    <property type="term" value="F:proton-transporting ATP synthase activity, rotational mechanism"/>
    <property type="evidence" value="ECO:0007669"/>
    <property type="project" value="EnsemblFungi"/>
</dbReference>
<dbReference type="GO" id="GO:0042776">
    <property type="term" value="P:proton motive force-driven mitochondrial ATP synthesis"/>
    <property type="evidence" value="ECO:0000318"/>
    <property type="project" value="GO_Central"/>
</dbReference>
<dbReference type="Gene3D" id="1.10.520.20">
    <property type="entry name" value="N-terminal domain of the delta subunit of the F1F0-ATP synthase"/>
    <property type="match status" value="1"/>
</dbReference>
<dbReference type="HAMAP" id="MF_01416">
    <property type="entry name" value="ATP_synth_delta_bact"/>
    <property type="match status" value="1"/>
</dbReference>
<dbReference type="InterPro" id="IPR026015">
    <property type="entry name" value="ATP_synth_OSCP/delta_N_sf"/>
</dbReference>
<dbReference type="InterPro" id="IPR000711">
    <property type="entry name" value="ATPase_OSCP/dsu"/>
</dbReference>
<dbReference type="NCBIfam" id="TIGR01145">
    <property type="entry name" value="ATP_synt_delta"/>
    <property type="match status" value="1"/>
</dbReference>
<dbReference type="PANTHER" id="PTHR11910">
    <property type="entry name" value="ATP SYNTHASE DELTA CHAIN"/>
    <property type="match status" value="1"/>
</dbReference>
<dbReference type="Pfam" id="PF00213">
    <property type="entry name" value="OSCP"/>
    <property type="match status" value="1"/>
</dbReference>
<dbReference type="PRINTS" id="PR00125">
    <property type="entry name" value="ATPASEDELTA"/>
</dbReference>
<dbReference type="SUPFAM" id="SSF47928">
    <property type="entry name" value="N-terminal domain of the delta subunit of the F1F0-ATP synthase"/>
    <property type="match status" value="1"/>
</dbReference>
<evidence type="ECO:0000250" key="1"/>
<evidence type="ECO:0000255" key="2"/>
<evidence type="ECO:0000305" key="3"/>
<reference key="1">
    <citation type="journal article" date="2004" name="Science">
        <title>The Ashbya gossypii genome as a tool for mapping the ancient Saccharomyces cerevisiae genome.</title>
        <authorList>
            <person name="Dietrich F.S."/>
            <person name="Voegeli S."/>
            <person name="Brachat S."/>
            <person name="Lerch A."/>
            <person name="Gates K."/>
            <person name="Steiner S."/>
            <person name="Mohr C."/>
            <person name="Poehlmann R."/>
            <person name="Luedi P."/>
            <person name="Choi S."/>
            <person name="Wing R.A."/>
            <person name="Flavier A."/>
            <person name="Gaffney T.D."/>
            <person name="Philippsen P."/>
        </authorList>
    </citation>
    <scope>NUCLEOTIDE SEQUENCE [LARGE SCALE GENOMIC DNA]</scope>
    <source>
        <strain>ATCC 10895 / CBS 109.51 / FGSC 9923 / NRRL Y-1056</strain>
    </source>
</reference>
<reference key="2">
    <citation type="journal article" date="2013" name="G3 (Bethesda)">
        <title>Genomes of Ashbya fungi isolated from insects reveal four mating-type loci, numerous translocations, lack of transposons, and distinct gene duplications.</title>
        <authorList>
            <person name="Dietrich F.S."/>
            <person name="Voegeli S."/>
            <person name="Kuo S."/>
            <person name="Philippsen P."/>
        </authorList>
    </citation>
    <scope>GENOME REANNOTATION</scope>
    <source>
        <strain>ATCC 10895 / CBS 109.51 / FGSC 9923 / NRRL Y-1056</strain>
    </source>
</reference>
<protein>
    <recommendedName>
        <fullName>ATP synthase subunit 5, mitochondrial</fullName>
        <shortName>ATP synthase chain 5</shortName>
    </recommendedName>
    <alternativeName>
        <fullName>Oligomycin sensitivity conferral protein</fullName>
        <shortName>OSCP</shortName>
    </alternativeName>
</protein>
<proteinExistence type="inferred from homology"/>
<sequence length="207" mass="21619">MSSRVFVRSLAAAAKAGVKPPIQLFGLEGTYASALFTAASKTTSIESAGKALASLSKTIAKDAKLGAILANPALPAGDRTVVVQTLAQKTPGMDAAVQNLMQVLAENNRLNLLQGVAGEFTKLTDAHNGLVQATVTTAQPLEGKLFRRVEKALAQSSFIGAGKTLKLENVVKPEIQGGLIVEVADRTVDLSIASRISKLNQVLKESI</sequence>
<comment type="function">
    <text evidence="1">Mitochondrial membrane ATP synthase (F(1)F(0) ATP synthase or Complex V) produces ATP from ADP in the presence of a proton gradient across the membrane which is generated by electron transport complexes of the respiratory chain. F-type ATPases consist of two structural domains, F(1) - containing the extramembraneous catalytic core and F(0) - containing the membrane proton channel, linked together by a central stalk and a peripheral stalk. During catalysis, ATP synthesis in the catalytic domain of F(1) is coupled via a rotary mechanism of the central stalk subunits to proton translocation. Part of the complex F(0) domain and the peripheric stalk, which acts as a stator to hold the catalytic alpha(3)beta(3) subcomplex and subunit a/ATP6 static relative to the rotary elements (By similarity).</text>
</comment>
<comment type="subunit">
    <text evidence="1">F-type ATPases have 2 components, CF(1) - the catalytic core - and CF(0) - the membrane proton channel. CF(1) has five subunits: alpha(3), beta(3), gamma(1), delta(1), epsilon(1). CF(0) has three main subunits: a, b and c (By similarity).</text>
</comment>
<comment type="subcellular location">
    <subcellularLocation>
        <location>Mitochondrion</location>
    </subcellularLocation>
    <subcellularLocation>
        <location>Mitochondrion inner membrane</location>
    </subcellularLocation>
</comment>
<comment type="similarity">
    <text evidence="3">Belongs to the ATPase delta chain family.</text>
</comment>
<accession>Q75EZ3</accession>